<reference key="1">
    <citation type="journal article" date="2005" name="Science">
        <title>The transcriptional landscape of the mammalian genome.</title>
        <authorList>
            <person name="Carninci P."/>
            <person name="Kasukawa T."/>
            <person name="Katayama S."/>
            <person name="Gough J."/>
            <person name="Frith M.C."/>
            <person name="Maeda N."/>
            <person name="Oyama R."/>
            <person name="Ravasi T."/>
            <person name="Lenhard B."/>
            <person name="Wells C."/>
            <person name="Kodzius R."/>
            <person name="Shimokawa K."/>
            <person name="Bajic V.B."/>
            <person name="Brenner S.E."/>
            <person name="Batalov S."/>
            <person name="Forrest A.R."/>
            <person name="Zavolan M."/>
            <person name="Davis M.J."/>
            <person name="Wilming L.G."/>
            <person name="Aidinis V."/>
            <person name="Allen J.E."/>
            <person name="Ambesi-Impiombato A."/>
            <person name="Apweiler R."/>
            <person name="Aturaliya R.N."/>
            <person name="Bailey T.L."/>
            <person name="Bansal M."/>
            <person name="Baxter L."/>
            <person name="Beisel K.W."/>
            <person name="Bersano T."/>
            <person name="Bono H."/>
            <person name="Chalk A.M."/>
            <person name="Chiu K.P."/>
            <person name="Choudhary V."/>
            <person name="Christoffels A."/>
            <person name="Clutterbuck D.R."/>
            <person name="Crowe M.L."/>
            <person name="Dalla E."/>
            <person name="Dalrymple B.P."/>
            <person name="de Bono B."/>
            <person name="Della Gatta G."/>
            <person name="di Bernardo D."/>
            <person name="Down T."/>
            <person name="Engstrom P."/>
            <person name="Fagiolini M."/>
            <person name="Faulkner G."/>
            <person name="Fletcher C.F."/>
            <person name="Fukushima T."/>
            <person name="Furuno M."/>
            <person name="Futaki S."/>
            <person name="Gariboldi M."/>
            <person name="Georgii-Hemming P."/>
            <person name="Gingeras T.R."/>
            <person name="Gojobori T."/>
            <person name="Green R.E."/>
            <person name="Gustincich S."/>
            <person name="Harbers M."/>
            <person name="Hayashi Y."/>
            <person name="Hensch T.K."/>
            <person name="Hirokawa N."/>
            <person name="Hill D."/>
            <person name="Huminiecki L."/>
            <person name="Iacono M."/>
            <person name="Ikeo K."/>
            <person name="Iwama A."/>
            <person name="Ishikawa T."/>
            <person name="Jakt M."/>
            <person name="Kanapin A."/>
            <person name="Katoh M."/>
            <person name="Kawasawa Y."/>
            <person name="Kelso J."/>
            <person name="Kitamura H."/>
            <person name="Kitano H."/>
            <person name="Kollias G."/>
            <person name="Krishnan S.P."/>
            <person name="Kruger A."/>
            <person name="Kummerfeld S.K."/>
            <person name="Kurochkin I.V."/>
            <person name="Lareau L.F."/>
            <person name="Lazarevic D."/>
            <person name="Lipovich L."/>
            <person name="Liu J."/>
            <person name="Liuni S."/>
            <person name="McWilliam S."/>
            <person name="Madan Babu M."/>
            <person name="Madera M."/>
            <person name="Marchionni L."/>
            <person name="Matsuda H."/>
            <person name="Matsuzawa S."/>
            <person name="Miki H."/>
            <person name="Mignone F."/>
            <person name="Miyake S."/>
            <person name="Morris K."/>
            <person name="Mottagui-Tabar S."/>
            <person name="Mulder N."/>
            <person name="Nakano N."/>
            <person name="Nakauchi H."/>
            <person name="Ng P."/>
            <person name="Nilsson R."/>
            <person name="Nishiguchi S."/>
            <person name="Nishikawa S."/>
            <person name="Nori F."/>
            <person name="Ohara O."/>
            <person name="Okazaki Y."/>
            <person name="Orlando V."/>
            <person name="Pang K.C."/>
            <person name="Pavan W.J."/>
            <person name="Pavesi G."/>
            <person name="Pesole G."/>
            <person name="Petrovsky N."/>
            <person name="Piazza S."/>
            <person name="Reed J."/>
            <person name="Reid J.F."/>
            <person name="Ring B.Z."/>
            <person name="Ringwald M."/>
            <person name="Rost B."/>
            <person name="Ruan Y."/>
            <person name="Salzberg S.L."/>
            <person name="Sandelin A."/>
            <person name="Schneider C."/>
            <person name="Schoenbach C."/>
            <person name="Sekiguchi K."/>
            <person name="Semple C.A."/>
            <person name="Seno S."/>
            <person name="Sessa L."/>
            <person name="Sheng Y."/>
            <person name="Shibata Y."/>
            <person name="Shimada H."/>
            <person name="Shimada K."/>
            <person name="Silva D."/>
            <person name="Sinclair B."/>
            <person name="Sperling S."/>
            <person name="Stupka E."/>
            <person name="Sugiura K."/>
            <person name="Sultana R."/>
            <person name="Takenaka Y."/>
            <person name="Taki K."/>
            <person name="Tammoja K."/>
            <person name="Tan S.L."/>
            <person name="Tang S."/>
            <person name="Taylor M.S."/>
            <person name="Tegner J."/>
            <person name="Teichmann S.A."/>
            <person name="Ueda H.R."/>
            <person name="van Nimwegen E."/>
            <person name="Verardo R."/>
            <person name="Wei C.L."/>
            <person name="Yagi K."/>
            <person name="Yamanishi H."/>
            <person name="Zabarovsky E."/>
            <person name="Zhu S."/>
            <person name="Zimmer A."/>
            <person name="Hide W."/>
            <person name="Bult C."/>
            <person name="Grimmond S.M."/>
            <person name="Teasdale R.D."/>
            <person name="Liu E.T."/>
            <person name="Brusic V."/>
            <person name="Quackenbush J."/>
            <person name="Wahlestedt C."/>
            <person name="Mattick J.S."/>
            <person name="Hume D.A."/>
            <person name="Kai C."/>
            <person name="Sasaki D."/>
            <person name="Tomaru Y."/>
            <person name="Fukuda S."/>
            <person name="Kanamori-Katayama M."/>
            <person name="Suzuki M."/>
            <person name="Aoki J."/>
            <person name="Arakawa T."/>
            <person name="Iida J."/>
            <person name="Imamura K."/>
            <person name="Itoh M."/>
            <person name="Kato T."/>
            <person name="Kawaji H."/>
            <person name="Kawagashira N."/>
            <person name="Kawashima T."/>
            <person name="Kojima M."/>
            <person name="Kondo S."/>
            <person name="Konno H."/>
            <person name="Nakano K."/>
            <person name="Ninomiya N."/>
            <person name="Nishio T."/>
            <person name="Okada M."/>
            <person name="Plessy C."/>
            <person name="Shibata K."/>
            <person name="Shiraki T."/>
            <person name="Suzuki S."/>
            <person name="Tagami M."/>
            <person name="Waki K."/>
            <person name="Watahiki A."/>
            <person name="Okamura-Oho Y."/>
            <person name="Suzuki H."/>
            <person name="Kawai J."/>
            <person name="Hayashizaki Y."/>
        </authorList>
    </citation>
    <scope>NUCLEOTIDE SEQUENCE [LARGE SCALE MRNA]</scope>
    <source>
        <strain>C57BL/6J</strain>
        <tissue>Embryo</tissue>
    </source>
</reference>
<reference key="2">
    <citation type="journal article" date="2004" name="Genome Res.">
        <title>The status, quality, and expansion of the NIH full-length cDNA project: the Mammalian Gene Collection (MGC).</title>
        <authorList>
            <consortium name="The MGC Project Team"/>
        </authorList>
    </citation>
    <scope>NUCLEOTIDE SEQUENCE [LARGE SCALE MRNA]</scope>
    <source>
        <strain>Czech II</strain>
        <tissue>Mammary tumor</tissue>
    </source>
</reference>
<reference key="3">
    <citation type="journal article" date="2010" name="Cell">
        <title>A tissue-specific atlas of mouse protein phosphorylation and expression.</title>
        <authorList>
            <person name="Huttlin E.L."/>
            <person name="Jedrychowski M.P."/>
            <person name="Elias J.E."/>
            <person name="Goswami T."/>
            <person name="Rad R."/>
            <person name="Beausoleil S.A."/>
            <person name="Villen J."/>
            <person name="Haas W."/>
            <person name="Sowa M.E."/>
            <person name="Gygi S.P."/>
        </authorList>
    </citation>
    <scope>IDENTIFICATION BY MASS SPECTROMETRY [LARGE SCALE ANALYSIS]</scope>
    <source>
        <tissue>Heart</tissue>
        <tissue>Kidney</tissue>
        <tissue>Lung</tissue>
        <tissue>Spleen</tissue>
    </source>
</reference>
<protein>
    <recommendedName>
        <fullName evidence="1">Small integral membrane protein 1</fullName>
    </recommendedName>
</protein>
<accession>P0C8K7</accession>
<comment type="function">
    <text evidence="2">Regulator of red blood cell formation.</text>
</comment>
<comment type="subunit">
    <text evidence="1">Homooligomer; disulfide-linked.</text>
</comment>
<comment type="subcellular location">
    <subcellularLocation>
        <location evidence="1">Cell membrane</location>
        <topology evidence="1">Single-pass type II membrane protein</topology>
    </subcellularLocation>
</comment>
<comment type="similarity">
    <text evidence="5">Belongs to the SMIM1 family.</text>
</comment>
<name>SMIM1_MOUSE</name>
<keyword id="KW-0007">Acetylation</keyword>
<keyword id="KW-1003">Cell membrane</keyword>
<keyword id="KW-1015">Disulfide bond</keyword>
<keyword id="KW-0472">Membrane</keyword>
<keyword id="KW-0597">Phosphoprotein</keyword>
<keyword id="KW-1185">Reference proteome</keyword>
<keyword id="KW-0735">Signal-anchor</keyword>
<keyword id="KW-0812">Transmembrane</keyword>
<keyword id="KW-1133">Transmembrane helix</keyword>
<gene>
    <name evidence="6" type="primary">Smim1</name>
</gene>
<proteinExistence type="evidence at protein level"/>
<organism>
    <name type="scientific">Mus musculus</name>
    <name type="common">Mouse</name>
    <dbReference type="NCBI Taxonomy" id="10090"/>
    <lineage>
        <taxon>Eukaryota</taxon>
        <taxon>Metazoa</taxon>
        <taxon>Chordata</taxon>
        <taxon>Craniata</taxon>
        <taxon>Vertebrata</taxon>
        <taxon>Euteleostomi</taxon>
        <taxon>Mammalia</taxon>
        <taxon>Eutheria</taxon>
        <taxon>Euarchontoglires</taxon>
        <taxon>Glires</taxon>
        <taxon>Rodentia</taxon>
        <taxon>Myomorpha</taxon>
        <taxon>Muroidea</taxon>
        <taxon>Muridae</taxon>
        <taxon>Murinae</taxon>
        <taxon>Mus</taxon>
        <taxon>Mus</taxon>
    </lineage>
</organism>
<dbReference type="EMBL" id="AK012228">
    <property type="status" value="NOT_ANNOTATED_CDS"/>
    <property type="molecule type" value="mRNA"/>
</dbReference>
<dbReference type="EMBL" id="BC055944">
    <property type="status" value="NOT_ANNOTATED_CDS"/>
    <property type="molecule type" value="mRNA"/>
</dbReference>
<dbReference type="CCDS" id="CCDS59664.1"/>
<dbReference type="RefSeq" id="NP_001157193.1">
    <property type="nucleotide sequence ID" value="NM_001163721.1"/>
</dbReference>
<dbReference type="RefSeq" id="NP_001157194.1">
    <property type="nucleotide sequence ID" value="NM_001163722.1"/>
</dbReference>
<dbReference type="RefSeq" id="NP_001344177.1">
    <property type="nucleotide sequence ID" value="NM_001357248.1"/>
</dbReference>
<dbReference type="RefSeq" id="XP_006539211.1">
    <property type="nucleotide sequence ID" value="XM_006539148.5"/>
</dbReference>
<dbReference type="RefSeq" id="XP_006539212.1">
    <property type="nucleotide sequence ID" value="XM_006539149.3"/>
</dbReference>
<dbReference type="RefSeq" id="XP_017175868.1">
    <property type="nucleotide sequence ID" value="XM_017320379.3"/>
</dbReference>
<dbReference type="SMR" id="P0C8K7"/>
<dbReference type="FunCoup" id="P0C8K7">
    <property type="interactions" value="278"/>
</dbReference>
<dbReference type="STRING" id="10090.ENSMUSP00000138692"/>
<dbReference type="iPTMnet" id="P0C8K7"/>
<dbReference type="PhosphoSitePlus" id="P0C8K7"/>
<dbReference type="SwissPalm" id="P0C8K7"/>
<dbReference type="jPOST" id="P0C8K7"/>
<dbReference type="PaxDb" id="10090-ENSMUSP00000138605"/>
<dbReference type="PeptideAtlas" id="P0C8K7"/>
<dbReference type="ProteomicsDB" id="261271"/>
<dbReference type="Pumba" id="P0C8K7"/>
<dbReference type="Antibodypedia" id="74931">
    <property type="antibodies" value="34 antibodies from 8 providers"/>
</dbReference>
<dbReference type="Ensembl" id="ENSMUST00000125533.9">
    <property type="protein sequence ID" value="ENSMUSP00000138324.2"/>
    <property type="gene ID" value="ENSMUSG00000078350.12"/>
</dbReference>
<dbReference type="Ensembl" id="ENSMUST00000126119.8">
    <property type="protein sequence ID" value="ENSMUSP00000138560.2"/>
    <property type="gene ID" value="ENSMUSG00000078350.12"/>
</dbReference>
<dbReference type="Ensembl" id="ENSMUST00000130175.8">
    <property type="protein sequence ID" value="ENSMUSP00000138675.2"/>
    <property type="gene ID" value="ENSMUSG00000078350.12"/>
</dbReference>
<dbReference type="Ensembl" id="ENSMUST00000132541.8">
    <property type="protein sequence ID" value="ENSMUSP00000138471.2"/>
    <property type="gene ID" value="ENSMUSG00000078350.12"/>
</dbReference>
<dbReference type="Ensembl" id="ENSMUST00000143047.8">
    <property type="protein sequence ID" value="ENSMUSP00000138733.2"/>
    <property type="gene ID" value="ENSMUSG00000078350.12"/>
</dbReference>
<dbReference type="Ensembl" id="ENSMUST00000145527.8">
    <property type="protein sequence ID" value="ENSMUSP00000138448.2"/>
    <property type="gene ID" value="ENSMUSG00000078350.12"/>
</dbReference>
<dbReference type="Ensembl" id="ENSMUST00000146054.8">
    <property type="protein sequence ID" value="ENSMUSP00000138605.2"/>
    <property type="gene ID" value="ENSMUSG00000078350.12"/>
</dbReference>
<dbReference type="Ensembl" id="ENSMUST00000182151.8">
    <property type="protein sequence ID" value="ENSMUSP00000138692.2"/>
    <property type="gene ID" value="ENSMUSG00000078350.12"/>
</dbReference>
<dbReference type="GeneID" id="68859"/>
<dbReference type="KEGG" id="mmu:68859"/>
<dbReference type="UCSC" id="uc012dqf.1">
    <property type="organism name" value="mouse"/>
</dbReference>
<dbReference type="AGR" id="MGI:1916109"/>
<dbReference type="CTD" id="388588"/>
<dbReference type="MGI" id="MGI:1916109">
    <property type="gene designation" value="Smim1"/>
</dbReference>
<dbReference type="VEuPathDB" id="HostDB:ENSMUSG00000078350"/>
<dbReference type="eggNOG" id="ENOG502SASD">
    <property type="taxonomic scope" value="Eukaryota"/>
</dbReference>
<dbReference type="GeneTree" id="ENSGT00520000060291"/>
<dbReference type="HOGENOM" id="CLU_2621305_0_0_1"/>
<dbReference type="InParanoid" id="P0C8K7"/>
<dbReference type="OMA" id="SRWENSH"/>
<dbReference type="OrthoDB" id="8633453at2759"/>
<dbReference type="PhylomeDB" id="P0C8K7"/>
<dbReference type="BioGRID-ORCS" id="68859">
    <property type="hits" value="3 hits in 75 CRISPR screens"/>
</dbReference>
<dbReference type="ChiTaRS" id="Smim1">
    <property type="organism name" value="mouse"/>
</dbReference>
<dbReference type="PRO" id="PR:P0C8K7"/>
<dbReference type="Proteomes" id="UP000000589">
    <property type="component" value="Chromosome 4"/>
</dbReference>
<dbReference type="RNAct" id="P0C8K7">
    <property type="molecule type" value="protein"/>
</dbReference>
<dbReference type="Bgee" id="ENSMUSG00000078350">
    <property type="expression patterns" value="Expressed in right kidney and 193 other cell types or tissues"/>
</dbReference>
<dbReference type="ExpressionAtlas" id="P0C8K7">
    <property type="expression patterns" value="baseline and differential"/>
</dbReference>
<dbReference type="GO" id="GO:0009986">
    <property type="term" value="C:cell surface"/>
    <property type="evidence" value="ECO:0000250"/>
    <property type="project" value="UniProtKB"/>
</dbReference>
<dbReference type="GO" id="GO:0005886">
    <property type="term" value="C:plasma membrane"/>
    <property type="evidence" value="ECO:0000250"/>
    <property type="project" value="UniProtKB"/>
</dbReference>
<dbReference type="GO" id="GO:0042803">
    <property type="term" value="F:protein homodimerization activity"/>
    <property type="evidence" value="ECO:0000250"/>
    <property type="project" value="UniProtKB"/>
</dbReference>
<dbReference type="InterPro" id="IPR031744">
    <property type="entry name" value="SMIM1"/>
</dbReference>
<dbReference type="PANTHER" id="PTHR38503">
    <property type="entry name" value="SMALL INTEGRAL MEMBRANE PROTEIN 1"/>
    <property type="match status" value="1"/>
</dbReference>
<dbReference type="PANTHER" id="PTHR38503:SF1">
    <property type="entry name" value="SMALL INTEGRAL MEMBRANE PROTEIN 1"/>
    <property type="match status" value="1"/>
</dbReference>
<dbReference type="Pfam" id="PF15875">
    <property type="entry name" value="DUF4731"/>
    <property type="match status" value="1"/>
</dbReference>
<sequence length="78" mass="8764">MQSQESGVHYSRWDSSSRDEVSMTAMSSSEEASCYRRISQKLCSGKLGIAMKVLGGVALFWIIFILGYITGYYVHKCK</sequence>
<evidence type="ECO:0000250" key="1">
    <source>
        <dbReference type="UniProtKB" id="B2RUZ4"/>
    </source>
</evidence>
<evidence type="ECO:0000250" key="2">
    <source>
        <dbReference type="UniProtKB" id="B3DHH5"/>
    </source>
</evidence>
<evidence type="ECO:0000255" key="3"/>
<evidence type="ECO:0000256" key="4">
    <source>
        <dbReference type="SAM" id="MobiDB-lite"/>
    </source>
</evidence>
<evidence type="ECO:0000305" key="5"/>
<evidence type="ECO:0000312" key="6">
    <source>
        <dbReference type="MGI" id="MGI:1916109"/>
    </source>
</evidence>
<feature type="chain" id="PRO_0000356183" description="Small integral membrane protein 1">
    <location>
        <begin position="1"/>
        <end position="78"/>
    </location>
</feature>
<feature type="topological domain" description="Cytoplasmic" evidence="1">
    <location>
        <begin position="1"/>
        <end position="48"/>
    </location>
</feature>
<feature type="transmembrane region" description="Helical; Signal-anchor for type II membrane protein" evidence="3">
    <location>
        <begin position="49"/>
        <end position="69"/>
    </location>
</feature>
<feature type="topological domain" description="Extracellular" evidence="1">
    <location>
        <begin position="70"/>
        <end position="78"/>
    </location>
</feature>
<feature type="region of interest" description="Disordered" evidence="4">
    <location>
        <begin position="1"/>
        <end position="22"/>
    </location>
</feature>
<feature type="compositionally biased region" description="Basic and acidic residues" evidence="4">
    <location>
        <begin position="11"/>
        <end position="21"/>
    </location>
</feature>
<feature type="modified residue" description="N-acetylmethionine" evidence="1">
    <location>
        <position position="1"/>
    </location>
</feature>
<feature type="modified residue" description="Phosphoserine" evidence="1">
    <location>
        <position position="6"/>
    </location>
</feature>
<feature type="modified residue" description="Phosphoserine" evidence="1">
    <location>
        <position position="17"/>
    </location>
</feature>
<feature type="modified residue" description="Phosphoserine" evidence="1">
    <location>
        <position position="22"/>
    </location>
</feature>
<feature type="modified residue" description="Phosphoserine" evidence="1">
    <location>
        <position position="27"/>
    </location>
</feature>